<dbReference type="EMBL" id="X17403">
    <property type="protein sequence ID" value="CAA35311.1"/>
    <property type="molecule type" value="Genomic_DNA"/>
</dbReference>
<dbReference type="EMBL" id="X04650">
    <property type="protein sequence ID" value="CAA28312.1"/>
    <property type="molecule type" value="Genomic_DNA"/>
</dbReference>
<dbReference type="EMBL" id="BK000394">
    <property type="protein sequence ID" value="DAA00089.1"/>
    <property type="molecule type" value="Genomic_DNA"/>
</dbReference>
<dbReference type="PIR" id="C26078">
    <property type="entry name" value="QQBEC3"/>
</dbReference>
<dbReference type="Proteomes" id="UP000008991">
    <property type="component" value="Segment"/>
</dbReference>
<dbReference type="Proteomes" id="UP000008992">
    <property type="component" value="Segment"/>
</dbReference>
<dbReference type="GO" id="GO:0030430">
    <property type="term" value="C:host cell cytoplasm"/>
    <property type="evidence" value="ECO:0007669"/>
    <property type="project" value="UniProtKB-SubCell"/>
</dbReference>
<dbReference type="GO" id="GO:0042025">
    <property type="term" value="C:host cell nucleus"/>
    <property type="evidence" value="ECO:0007669"/>
    <property type="project" value="UniProtKB-SubCell"/>
</dbReference>
<dbReference type="GO" id="GO:0044423">
    <property type="term" value="C:virion component"/>
    <property type="evidence" value="ECO:0007669"/>
    <property type="project" value="UniProtKB-KW"/>
</dbReference>
<dbReference type="GO" id="GO:0030291">
    <property type="term" value="F:protein serine/threonine kinase inhibitor activity"/>
    <property type="evidence" value="ECO:0007669"/>
    <property type="project" value="UniProtKB-KW"/>
</dbReference>
<dbReference type="GO" id="GO:0039686">
    <property type="term" value="P:bidirectional double-stranded viral DNA replication"/>
    <property type="evidence" value="ECO:0000314"/>
    <property type="project" value="UniProtKB"/>
</dbReference>
<dbReference type="GO" id="GO:0052170">
    <property type="term" value="P:symbiont-mediated suppression of host innate immune response"/>
    <property type="evidence" value="ECO:0007669"/>
    <property type="project" value="UniProtKB-KW"/>
</dbReference>
<dbReference type="GO" id="GO:0039580">
    <property type="term" value="P:symbiont-mediated suppression of host PKR/eIFalpha signaling"/>
    <property type="evidence" value="ECO:0007669"/>
    <property type="project" value="UniProtKB-KW"/>
</dbReference>
<dbReference type="GO" id="GO:0039502">
    <property type="term" value="P:symbiont-mediated suppression of host type I interferon-mediated signaling pathway"/>
    <property type="evidence" value="ECO:0007669"/>
    <property type="project" value="UniProtKB-KW"/>
</dbReference>
<dbReference type="InterPro" id="IPR003360">
    <property type="entry name" value="US22-like"/>
</dbReference>
<dbReference type="Pfam" id="PF02393">
    <property type="entry name" value="US22"/>
    <property type="match status" value="2"/>
</dbReference>
<organismHost>
    <name type="scientific">Homo sapiens</name>
    <name type="common">Human</name>
    <dbReference type="NCBI Taxonomy" id="9606"/>
</organismHost>
<comment type="function">
    <text evidence="2 3">Inhibits the establishment of the antiviral state in the infected cell. Prevents the phosphorylation of the host eukaryotic translation initiation factor eIF-2alpha and thus the shutoff of viral and cellular protein synthesis by directly interacting with EIF2AK2/PKR. May also participate in viral DNA replication by interacting with the DNA polymerase accessory protein and the lytic origin of replication, oriLyt.</text>
</comment>
<comment type="subunit">
    <text evidence="2 4">Interacts (via N-terminus) with the viral DNA polymerase accessory subunit UL44. Interacts (via C-terminus) with host EIF2AK2/PKR.</text>
</comment>
<comment type="subcellular location">
    <subcellularLocation>
        <location evidence="5">Virion</location>
    </subcellularLocation>
    <subcellularLocation>
        <location evidence="5">Host cytoplasm</location>
    </subcellularLocation>
    <subcellularLocation>
        <location evidence="5">Host nucleus</location>
    </subcellularLocation>
    <text>Isoform IRS1-263 is predominantly nuclear.</text>
</comment>
<comment type="alternative products">
    <event type="alternative initiation"/>
    <isoform>
        <id>P09715-1</id>
        <name>IRS1</name>
        <sequence type="displayed"/>
    </isoform>
    <isoform>
        <id>P09715-2</id>
        <name>IRS1-263</name>
        <sequence type="described" ref="VSP_043923"/>
    </isoform>
</comment>
<comment type="similarity">
    <text evidence="6">Belongs to the herpesviridae US22 family.</text>
</comment>
<organism>
    <name type="scientific">Human cytomegalovirus (strain AD169)</name>
    <name type="common">HHV-5</name>
    <name type="synonym">Human herpesvirus 5</name>
    <dbReference type="NCBI Taxonomy" id="10360"/>
    <lineage>
        <taxon>Viruses</taxon>
        <taxon>Duplodnaviria</taxon>
        <taxon>Heunggongvirae</taxon>
        <taxon>Peploviricota</taxon>
        <taxon>Herviviricetes</taxon>
        <taxon>Herpesvirales</taxon>
        <taxon>Orthoherpesviridae</taxon>
        <taxon>Betaherpesvirinae</taxon>
        <taxon>Cytomegalovirus</taxon>
        <taxon>Cytomegalovirus humanbeta5</taxon>
        <taxon>Human cytomegalovirus</taxon>
    </lineage>
</organism>
<feature type="chain" id="PRO_0000115262" description="Protein IRS1">
    <location>
        <begin position="1"/>
        <end position="846"/>
    </location>
</feature>
<feature type="region of interest" description="Disordered" evidence="1">
    <location>
        <begin position="1"/>
        <end position="82"/>
    </location>
</feature>
<feature type="region of interest" description="Disordered" evidence="1">
    <location>
        <begin position="366"/>
        <end position="385"/>
    </location>
</feature>
<feature type="region of interest" description="Disordered" evidence="1">
    <location>
        <begin position="606"/>
        <end position="626"/>
    </location>
</feature>
<feature type="region of interest" description="Disordered" evidence="1">
    <location>
        <begin position="714"/>
        <end position="846"/>
    </location>
</feature>
<feature type="compositionally biased region" description="Gly residues" evidence="1">
    <location>
        <begin position="16"/>
        <end position="25"/>
    </location>
</feature>
<feature type="compositionally biased region" description="Low complexity" evidence="1">
    <location>
        <begin position="26"/>
        <end position="56"/>
    </location>
</feature>
<feature type="compositionally biased region" description="Acidic residues" evidence="1">
    <location>
        <begin position="722"/>
        <end position="732"/>
    </location>
</feature>
<feature type="compositionally biased region" description="Basic residues" evidence="1">
    <location>
        <begin position="832"/>
        <end position="846"/>
    </location>
</feature>
<feature type="splice variant" id="VSP_043923" description="In isoform IRS1-263." evidence="6">
    <location>
        <begin position="1"/>
        <end position="583"/>
    </location>
</feature>
<name>IRS1_HCMVA</name>
<reference key="1">
    <citation type="journal article" date="1986" name="J. Mol. Biol.">
        <title>Sequence of the short unique region, short repeats, and part of the long repeats of human cytomegalovirus.</title>
        <authorList>
            <person name="Weston K.M."/>
            <person name="Barrell B.G."/>
        </authorList>
    </citation>
    <scope>NUCLEOTIDE SEQUENCE [GENOMIC DNA]</scope>
</reference>
<reference key="2">
    <citation type="journal article" date="1990" name="Curr. Top. Microbiol. Immunol.">
        <title>Analysis of the protein-coding content of the sequence of human cytomegalovirus strain AD169.</title>
        <authorList>
            <person name="Chee M.S."/>
            <person name="Bankier A.T."/>
            <person name="Beck S."/>
            <person name="Bohni R."/>
            <person name="Brown C.M."/>
            <person name="Cerny R."/>
            <person name="Horsnell T."/>
            <person name="Hutchison C.A. III"/>
            <person name="Kouzarides T."/>
            <person name="Martignetti J.A."/>
            <person name="Preddie E."/>
            <person name="Satchwell S.C."/>
            <person name="Tomlinson P."/>
            <person name="Weston K.M."/>
            <person name="Barrell B.G."/>
        </authorList>
    </citation>
    <scope>NUCLEOTIDE SEQUENCE [LARGE SCALE GENOMIC DNA]</scope>
</reference>
<reference key="3">
    <citation type="journal article" date="2003" name="J. Gen. Virol.">
        <title>The human cytomegalovirus genome revisited: comparison with the chimpanzee cytomegalovirus genome.</title>
        <authorList>
            <person name="Davison A.J."/>
            <person name="Dolan A."/>
            <person name="Akter P."/>
            <person name="Addison C."/>
            <person name="Dargan D.J."/>
            <person name="Alcendor D.J."/>
            <person name="McGeoch D.J."/>
            <person name="Hayward G.S."/>
        </authorList>
    </citation>
    <scope>GENOME REANNOTATION</scope>
</reference>
<reference key="4">
    <citation type="journal article" date="1997" name="J. Virol.">
        <title>Characterization of the human cytomegalovirus irs1 and trs1 genes: a second immediate-early transcription unit within irs1 whose product antagonizes transcriptional activation.</title>
        <authorList>
            <person name="Romanowski M.J."/>
            <person name="Shenk T."/>
        </authorList>
    </citation>
    <scope>ISOFORM IRS1-263</scope>
    <scope>SUBCELLULAR LOCATION</scope>
</reference>
<reference key="5">
    <citation type="journal article" date="2003" name="J. Gen. Virol.">
        <authorList>
            <person name="Davison A.J."/>
            <person name="Dolan A."/>
            <person name="Akter P."/>
            <person name="Addison C."/>
            <person name="Dargan D.J."/>
            <person name="Alcendor D.J."/>
            <person name="McGeoch D.J."/>
            <person name="Hayward G.S."/>
        </authorList>
    </citation>
    <scope>ERRATUM OF PUBMED:8995674</scope>
</reference>
<reference key="6">
    <citation type="journal article" date="2004" name="J. Virol.">
        <title>Identification of proteins in human cytomegalovirus (HCMV) particles: the HCMV proteome.</title>
        <authorList>
            <person name="Varnum S.M."/>
            <person name="Streblow D.N."/>
            <person name="Monroe M.E."/>
            <person name="Smith P."/>
            <person name="Auberry K.J."/>
            <person name="Pasa-Tolic L."/>
            <person name="Wang D."/>
            <person name="Camp D.G. II"/>
            <person name="Rodland K."/>
            <person name="Wiley S."/>
            <person name="Britt W."/>
            <person name="Shenk T."/>
            <person name="Smith R.D."/>
            <person name="Nelson J.A."/>
        </authorList>
    </citation>
    <scope>IDENTIFICATION</scope>
</reference>
<reference key="7">
    <citation type="journal article" date="2004" name="J. Virol.">
        <authorList>
            <person name="Varnum S.M."/>
            <person name="Streblow D.N."/>
            <person name="Monroe M.E."/>
            <person name="Smith P."/>
            <person name="Auberry K.J."/>
            <person name="Pasa-Tolic L."/>
            <person name="Wang D."/>
            <person name="Camp D.G. II"/>
            <person name="Rodland K."/>
            <person name="Wiley S."/>
            <person name="Britt W."/>
            <person name="Shenk T."/>
            <person name="Smith R.D."/>
            <person name="Nelson J.A."/>
        </authorList>
    </citation>
    <scope>ERRATUM OF PUBMED:15452216</scope>
</reference>
<reference key="8">
    <citation type="journal article" date="2006" name="J. Virol.">
        <title>Binding and nuclear relocalization of protein kinase R by human cytomegalovirus TRS1.</title>
        <authorList>
            <person name="Hakki M."/>
            <person name="Marshall E.E."/>
            <person name="De Niro K.L."/>
            <person name="Geballe A.P."/>
        </authorList>
    </citation>
    <scope>FUNCTION</scope>
    <scope>INTERACTION WITH HOST EIF2AK2</scope>
</reference>
<reference key="9">
    <citation type="journal article" date="2009" name="J. Virol.">
        <title>Essential role for either TRS1 or IRS1 in human cytomegalovirus replication.</title>
        <authorList>
            <person name="Marshall E.E."/>
            <person name="Bierle C.J."/>
            <person name="Brune W."/>
            <person name="Geballe A.P."/>
        </authorList>
    </citation>
    <scope>FUNCTION</scope>
</reference>
<reference key="10">
    <citation type="journal article" date="2010" name="J. Gen. Virol.">
        <title>Association of human cytomegalovirus proteins IRS1 and TRS1 with the viral DNA polymerase accessory subunit UL44.</title>
        <authorList>
            <person name="Strang B.L."/>
            <person name="Geballe A.P."/>
            <person name="Coen D.M."/>
        </authorList>
    </citation>
    <scope>INTERACTION WITH UL44</scope>
</reference>
<protein>
    <recommendedName>
        <fullName>Protein IRS1</fullName>
    </recommendedName>
    <alternativeName>
        <fullName>HQRF1</fullName>
    </alternativeName>
</protein>
<accession>P09715</accession>
<accession>Q7M6U2</accession>
<proteinExistence type="evidence at protein level"/>
<evidence type="ECO:0000256" key="1">
    <source>
        <dbReference type="SAM" id="MobiDB-lite"/>
    </source>
</evidence>
<evidence type="ECO:0000269" key="2">
    <source>
    </source>
</evidence>
<evidence type="ECO:0000269" key="3">
    <source>
    </source>
</evidence>
<evidence type="ECO:0000269" key="4">
    <source>
    </source>
</evidence>
<evidence type="ECO:0000269" key="5">
    <source>
    </source>
</evidence>
<evidence type="ECO:0000305" key="6"/>
<keyword id="KW-0024">Alternative initiation</keyword>
<keyword id="KW-0244">Early protein</keyword>
<keyword id="KW-1035">Host cytoplasm</keyword>
<keyword id="KW-1048">Host nucleus</keyword>
<keyword id="KW-0945">Host-virus interaction</keyword>
<keyword id="KW-1090">Inhibition of host innate immune response by virus</keyword>
<keyword id="KW-1114">Inhibition of host interferon signaling pathway by virus</keyword>
<keyword id="KW-1102">Inhibition of host PKR by virus</keyword>
<keyword id="KW-0922">Interferon antiviral system evasion</keyword>
<keyword id="KW-1185">Reference proteome</keyword>
<keyword id="KW-0804">Transcription</keyword>
<keyword id="KW-0899">Viral immunoevasion</keyword>
<keyword id="KW-0946">Virion</keyword>
<gene>
    <name type="primary">IRS1</name>
</gene>
<sequence>MAQRNGMSPRPPPLGRGRGAGGPSGVGSSPPSSCVPMGAPSTAGTGASAAATTTPGHGVHRVEPRGPPGAPPSSGNNSNFWHGPERLLLSQIPVERQALTELEYQAMGAVWRAAFLANSTGRAMRKWSQRDAGTLLPLGRPYGFYARVTPRSQMNGVGATDLRQLSPRDAWIVLVATVVHEVDPAADPTVGDKAGHPEGLCAQDGLYLALGAGFRVFVYDLANNTLILAARDADEWFRHGAGEVVRLYRCNRLGVGTPRATLLPQPALRQTLLRAEEATALGRELRRRWAGTTVALQTPGRRLQPMVLLGAWQELAQYEPFASAPHPASLLTAVRRHLNQRLCCGWLALGAVLPARWLGCAAGPATGTAAGTTSPPAASGTETEAAGGDAPCAIAGAVGSAVPVPPQPYGAAGGGAICVPNADAHAVVGADAAAAAAPTVMVGSTAMAGPAASGTVPRAMLVVLLDELGAVFGYCPLDGHVYPLAAELSHFLRAGVLGALALGRESAPAAEAARRLLPELDREQWERPRWDALHLHPRAALWAREPHGQWEFMFREQRGDPINDPLAFRLSDARTLGLDLTTVMTERQSQLPEKYIGFYQIRKPPWLMEQPPPPSRQTKPDAATMPPPLSAQASVSYALRYDDESWRPLSTVDDHKAWLDLDESHWVLGDSRPDDIKQRRLLKATQRRGAEIDRPMPVVPEECYDQRFTTEGHQVIPLCASEPEDDDEDPTYDELPSRPPQKHKPPDKPPRLCKTGPGPPPLPPKQRHGSTDGKVSAPRQSEHHKRQTRPPRPPPPKFGDRTAAHLSQNMRDMYLDMCTSSGHRPRPPAPPRPKKCQTHAPHHVHH</sequence>